<sequence>MKRKVLLIPLIIFLAIAAALLWQLARNAEGDDPTNLESALIGKPVPKFRLESLDNPGQFYQADVLTQGKPVLLNVWATWCPTCRAEHQYLNQLSAQGIRVVGMNYKDDRQKAISWLKELGNPYALSLFDGDGMLGLDLGVYGAPETFLIDGNGIIRYRHAGDLNPRVWEEEIKPLWEKYSKEAAQ</sequence>
<feature type="chain" id="PRO_0000201293" description="Thiol:disulfide interchange protein DsbE">
    <location>
        <begin position="1"/>
        <end position="185"/>
    </location>
</feature>
<feature type="topological domain" description="Cytoplasmic" evidence="1">
    <location>
        <begin position="1"/>
        <end position="4"/>
    </location>
</feature>
<feature type="transmembrane region" description="Helical" evidence="1">
    <location>
        <begin position="5"/>
        <end position="25"/>
    </location>
</feature>
<feature type="topological domain" description="Periplasmic" evidence="1">
    <location>
        <begin position="26"/>
        <end position="185"/>
    </location>
</feature>
<feature type="domain" description="Thioredoxin" evidence="2">
    <location>
        <begin position="39"/>
        <end position="177"/>
    </location>
</feature>
<feature type="disulfide bond" description="Redox-active" evidence="4">
    <location>
        <begin position="80"/>
        <end position="83"/>
    </location>
</feature>
<feature type="mutagenesis site" description="Drastic decrease in activity." evidence="3">
    <original>C</original>
    <variation>S</variation>
    <location>
        <position position="80"/>
    </location>
</feature>
<feature type="mutagenesis site" description="Drastic decrease in activity." evidence="3">
    <original>C</original>
    <variation>S</variation>
    <location>
        <position position="83"/>
    </location>
</feature>
<feature type="helix" evidence="7">
    <location>
        <begin position="36"/>
        <end position="38"/>
    </location>
</feature>
<feature type="turn" evidence="6">
    <location>
        <begin position="39"/>
        <end position="42"/>
    </location>
</feature>
<feature type="strand" evidence="6">
    <location>
        <begin position="49"/>
        <end position="55"/>
    </location>
</feature>
<feature type="strand" evidence="6">
    <location>
        <begin position="59"/>
        <end position="61"/>
    </location>
</feature>
<feature type="helix" evidence="6">
    <location>
        <begin position="62"/>
        <end position="65"/>
    </location>
</feature>
<feature type="strand" evidence="5">
    <location>
        <begin position="67"/>
        <end position="69"/>
    </location>
</feature>
<feature type="strand" evidence="6">
    <location>
        <begin position="71"/>
        <end position="76"/>
    </location>
</feature>
<feature type="helix" evidence="6">
    <location>
        <begin position="81"/>
        <end position="95"/>
    </location>
</feature>
<feature type="strand" evidence="6">
    <location>
        <begin position="100"/>
        <end position="106"/>
    </location>
</feature>
<feature type="helix" evidence="6">
    <location>
        <begin position="109"/>
        <end position="119"/>
    </location>
</feature>
<feature type="strand" evidence="6">
    <location>
        <begin position="124"/>
        <end position="129"/>
    </location>
</feature>
<feature type="helix" evidence="6">
    <location>
        <begin position="133"/>
        <end position="138"/>
    </location>
</feature>
<feature type="strand" evidence="6">
    <location>
        <begin position="142"/>
        <end position="149"/>
    </location>
</feature>
<feature type="strand" evidence="6">
    <location>
        <begin position="153"/>
        <end position="161"/>
    </location>
</feature>
<feature type="helix" evidence="6">
    <location>
        <begin position="165"/>
        <end position="170"/>
    </location>
</feature>
<feature type="helix" evidence="6">
    <location>
        <begin position="173"/>
        <end position="183"/>
    </location>
</feature>
<dbReference type="EMBL" id="U00008">
    <property type="protein sequence ID" value="AAA16387.1"/>
    <property type="molecule type" value="Genomic_DNA"/>
</dbReference>
<dbReference type="EMBL" id="U00096">
    <property type="protein sequence ID" value="AAC75255.1"/>
    <property type="molecule type" value="Genomic_DNA"/>
</dbReference>
<dbReference type="EMBL" id="AP009048">
    <property type="protein sequence ID" value="BAE76658.1"/>
    <property type="molecule type" value="Genomic_DNA"/>
</dbReference>
<dbReference type="PIR" id="A64989">
    <property type="entry name" value="A64989"/>
</dbReference>
<dbReference type="RefSeq" id="NP_416699.1">
    <property type="nucleotide sequence ID" value="NC_000913.3"/>
</dbReference>
<dbReference type="RefSeq" id="WP_000824439.1">
    <property type="nucleotide sequence ID" value="NZ_STEB01000002.1"/>
</dbReference>
<dbReference type="PDB" id="1Z5Y">
    <property type="method" value="X-ray"/>
    <property type="resolution" value="1.94 A"/>
    <property type="chains" value="E=43-185"/>
</dbReference>
<dbReference type="PDB" id="2B1K">
    <property type="method" value="X-ray"/>
    <property type="resolution" value="1.90 A"/>
    <property type="chains" value="A=19-185"/>
</dbReference>
<dbReference type="PDB" id="2B1L">
    <property type="method" value="X-ray"/>
    <property type="resolution" value="1.90 A"/>
    <property type="chains" value="A/B=58-185"/>
</dbReference>
<dbReference type="PDB" id="2G0F">
    <property type="method" value="X-ray"/>
    <property type="resolution" value="2.20 A"/>
    <property type="chains" value="A=19-185"/>
</dbReference>
<dbReference type="PDB" id="3K8N">
    <property type="method" value="X-ray"/>
    <property type="resolution" value="2.30 A"/>
    <property type="chains" value="A=1-185"/>
</dbReference>
<dbReference type="PDBsum" id="1Z5Y"/>
<dbReference type="PDBsum" id="2B1K"/>
<dbReference type="PDBsum" id="2B1L"/>
<dbReference type="PDBsum" id="2G0F"/>
<dbReference type="PDBsum" id="3K8N"/>
<dbReference type="BMRB" id="P0AA86"/>
<dbReference type="SMR" id="P0AA86"/>
<dbReference type="BioGRID" id="4263405">
    <property type="interactions" value="36"/>
</dbReference>
<dbReference type="DIP" id="DIP-48446N"/>
<dbReference type="FunCoup" id="P0AA86">
    <property type="interactions" value="371"/>
</dbReference>
<dbReference type="IntAct" id="P0AA86">
    <property type="interactions" value="2"/>
</dbReference>
<dbReference type="STRING" id="511145.b2195"/>
<dbReference type="jPOST" id="P0AA86"/>
<dbReference type="PaxDb" id="511145-b2195"/>
<dbReference type="EnsemblBacteria" id="AAC75255">
    <property type="protein sequence ID" value="AAC75255"/>
    <property type="gene ID" value="b2195"/>
</dbReference>
<dbReference type="GeneID" id="93774983"/>
<dbReference type="GeneID" id="949073"/>
<dbReference type="KEGG" id="ecj:JW2183"/>
<dbReference type="KEGG" id="eco:b2195"/>
<dbReference type="KEGG" id="ecoc:C3026_12270"/>
<dbReference type="PATRIC" id="fig|511145.12.peg.2284"/>
<dbReference type="EchoBASE" id="EB1984"/>
<dbReference type="eggNOG" id="COG0526">
    <property type="taxonomic scope" value="Bacteria"/>
</dbReference>
<dbReference type="HOGENOM" id="CLU_042529_19_1_6"/>
<dbReference type="InParanoid" id="P0AA86"/>
<dbReference type="OMA" id="KWLAEFH"/>
<dbReference type="OrthoDB" id="9799347at2"/>
<dbReference type="PhylomeDB" id="P0AA86"/>
<dbReference type="BioCyc" id="EcoCyc:EG12053-MONOMER"/>
<dbReference type="BioCyc" id="MetaCyc:EG12053-MONOMER"/>
<dbReference type="EvolutionaryTrace" id="P0AA86"/>
<dbReference type="PRO" id="PR:P0AA86"/>
<dbReference type="Proteomes" id="UP000000625">
    <property type="component" value="Chromosome"/>
</dbReference>
<dbReference type="GO" id="GO:0030288">
    <property type="term" value="C:outer membrane-bounded periplasmic space"/>
    <property type="evidence" value="ECO:0007669"/>
    <property type="project" value="InterPro"/>
</dbReference>
<dbReference type="GO" id="GO:0005886">
    <property type="term" value="C:plasma membrane"/>
    <property type="evidence" value="ECO:0007669"/>
    <property type="project" value="UniProtKB-SubCell"/>
</dbReference>
<dbReference type="GO" id="GO:0015036">
    <property type="term" value="F:disulfide oxidoreductase activity"/>
    <property type="evidence" value="ECO:0000314"/>
    <property type="project" value="EcoCyc"/>
</dbReference>
<dbReference type="GO" id="GO:0017004">
    <property type="term" value="P:cytochrome complex assembly"/>
    <property type="evidence" value="ECO:0000315"/>
    <property type="project" value="EcoCyc"/>
</dbReference>
<dbReference type="CDD" id="cd03010">
    <property type="entry name" value="TlpA_like_DsbE"/>
    <property type="match status" value="1"/>
</dbReference>
<dbReference type="FunFam" id="3.40.30.10:FF:000040">
    <property type="entry name" value="Thiol:disulfide interchange protein DsbE"/>
    <property type="match status" value="1"/>
</dbReference>
<dbReference type="Gene3D" id="3.40.30.10">
    <property type="entry name" value="Glutaredoxin"/>
    <property type="match status" value="1"/>
</dbReference>
<dbReference type="InterPro" id="IPR004799">
    <property type="entry name" value="Periplasmic_diS_OxRdtase_DsbE"/>
</dbReference>
<dbReference type="InterPro" id="IPR013740">
    <property type="entry name" value="Redoxin"/>
</dbReference>
<dbReference type="InterPro" id="IPR036249">
    <property type="entry name" value="Thioredoxin-like_sf"/>
</dbReference>
<dbReference type="InterPro" id="IPR017937">
    <property type="entry name" value="Thioredoxin_CS"/>
</dbReference>
<dbReference type="InterPro" id="IPR013766">
    <property type="entry name" value="Thioredoxin_domain"/>
</dbReference>
<dbReference type="InterPro" id="IPR050553">
    <property type="entry name" value="Thioredoxin_ResA/DsbE_sf"/>
</dbReference>
<dbReference type="NCBIfam" id="TIGR00385">
    <property type="entry name" value="dsbE"/>
    <property type="match status" value="1"/>
</dbReference>
<dbReference type="NCBIfam" id="NF011941">
    <property type="entry name" value="PRK15412.1"/>
    <property type="match status" value="1"/>
</dbReference>
<dbReference type="PANTHER" id="PTHR42852">
    <property type="entry name" value="THIOL:DISULFIDE INTERCHANGE PROTEIN DSBE"/>
    <property type="match status" value="1"/>
</dbReference>
<dbReference type="PANTHER" id="PTHR42852:SF6">
    <property type="entry name" value="THIOL:DISULFIDE INTERCHANGE PROTEIN DSBE"/>
    <property type="match status" value="1"/>
</dbReference>
<dbReference type="Pfam" id="PF08534">
    <property type="entry name" value="Redoxin"/>
    <property type="match status" value="1"/>
</dbReference>
<dbReference type="SUPFAM" id="SSF52833">
    <property type="entry name" value="Thioredoxin-like"/>
    <property type="match status" value="1"/>
</dbReference>
<dbReference type="PROSITE" id="PS00194">
    <property type="entry name" value="THIOREDOXIN_1"/>
    <property type="match status" value="1"/>
</dbReference>
<dbReference type="PROSITE" id="PS51352">
    <property type="entry name" value="THIOREDOXIN_2"/>
    <property type="match status" value="1"/>
</dbReference>
<protein>
    <recommendedName>
        <fullName>Thiol:disulfide interchange protein DsbE</fullName>
    </recommendedName>
    <alternativeName>
        <fullName>Cytochrome c biogenesis protein CcmG</fullName>
    </alternativeName>
</protein>
<evidence type="ECO:0000255" key="1"/>
<evidence type="ECO:0000255" key="2">
    <source>
        <dbReference type="PROSITE-ProRule" id="PRU00691"/>
    </source>
</evidence>
<evidence type="ECO:0000269" key="3">
    <source>
    </source>
</evidence>
<evidence type="ECO:0000305" key="4"/>
<evidence type="ECO:0007829" key="5">
    <source>
        <dbReference type="PDB" id="1Z5Y"/>
    </source>
</evidence>
<evidence type="ECO:0007829" key="6">
    <source>
        <dbReference type="PDB" id="2B1K"/>
    </source>
</evidence>
<evidence type="ECO:0007829" key="7">
    <source>
        <dbReference type="PDB" id="3K8N"/>
    </source>
</evidence>
<name>DSBE_ECOLI</name>
<comment type="function">
    <text>Involved in disulfide bond formation. Catalyzes a late, reductive step in the assembly of periplasmic c-type cytochromes, probably the reduction of disulfide bonds of the apocytochrome c to allow covalent linkage with the heme. Possible subunit of a heme lyase. DsbE is maintained in a reduced state by DsbD.</text>
</comment>
<comment type="interaction">
    <interactant intactId="EBI-9014059">
        <id>P0AA86</id>
    </interactant>
    <interactant intactId="EBI-9014057">
        <id>P36655</id>
        <label>dsbD</label>
    </interactant>
    <organismsDiffer>false</organismsDiffer>
    <experiments>4</experiments>
</comment>
<comment type="subcellular location">
    <subcellularLocation>
        <location>Cell inner membrane</location>
        <topology>Single-pass membrane protein</topology>
        <orientation>Periplasmic side</orientation>
    </subcellularLocation>
</comment>
<comment type="similarity">
    <text evidence="4">Belongs to the thioredoxin family. DsbE subfamily.</text>
</comment>
<accession>P0AA86</accession>
<accession>P33926</accession>
<accession>Q2MAP8</accession>
<gene>
    <name type="primary">dsbE</name>
    <name type="synonym">ccmG</name>
    <name type="synonym">yejQ</name>
    <name type="ordered locus">b2195</name>
    <name type="ordered locus">JW2183</name>
</gene>
<proteinExistence type="evidence at protein level"/>
<organism>
    <name type="scientific">Escherichia coli (strain K12)</name>
    <dbReference type="NCBI Taxonomy" id="83333"/>
    <lineage>
        <taxon>Bacteria</taxon>
        <taxon>Pseudomonadati</taxon>
        <taxon>Pseudomonadota</taxon>
        <taxon>Gammaproteobacteria</taxon>
        <taxon>Enterobacterales</taxon>
        <taxon>Enterobacteriaceae</taxon>
        <taxon>Escherichia</taxon>
    </lineage>
</organism>
<keyword id="KW-0002">3D-structure</keyword>
<keyword id="KW-0997">Cell inner membrane</keyword>
<keyword id="KW-1003">Cell membrane</keyword>
<keyword id="KW-0201">Cytochrome c-type biogenesis</keyword>
<keyword id="KW-0903">Direct protein sequencing</keyword>
<keyword id="KW-1015">Disulfide bond</keyword>
<keyword id="KW-0472">Membrane</keyword>
<keyword id="KW-0676">Redox-active center</keyword>
<keyword id="KW-1185">Reference proteome</keyword>
<keyword id="KW-0812">Transmembrane</keyword>
<keyword id="KW-1133">Transmembrane helix</keyword>
<reference key="1">
    <citation type="submission" date="1993-10" db="EMBL/GenBank/DDBJ databases">
        <authorList>
            <person name="Richterich P."/>
            <person name="Lakey N."/>
            <person name="Gryan G."/>
            <person name="Jaehn L."/>
            <person name="Mintz L."/>
            <person name="Robison K."/>
            <person name="Church G.M."/>
        </authorList>
    </citation>
    <scope>NUCLEOTIDE SEQUENCE [GENOMIC DNA]</scope>
    <source>
        <strain>K12 / BHB2600</strain>
    </source>
</reference>
<reference key="2">
    <citation type="journal article" date="1997" name="Science">
        <title>The complete genome sequence of Escherichia coli K-12.</title>
        <authorList>
            <person name="Blattner F.R."/>
            <person name="Plunkett G. III"/>
            <person name="Bloch C.A."/>
            <person name="Perna N.T."/>
            <person name="Burland V."/>
            <person name="Riley M."/>
            <person name="Collado-Vides J."/>
            <person name="Glasner J.D."/>
            <person name="Rode C.K."/>
            <person name="Mayhew G.F."/>
            <person name="Gregor J."/>
            <person name="Davis N.W."/>
            <person name="Kirkpatrick H.A."/>
            <person name="Goeden M.A."/>
            <person name="Rose D.J."/>
            <person name="Mau B."/>
            <person name="Shao Y."/>
        </authorList>
    </citation>
    <scope>NUCLEOTIDE SEQUENCE [LARGE SCALE GENOMIC DNA]</scope>
    <source>
        <strain>K12 / MG1655 / ATCC 47076</strain>
    </source>
</reference>
<reference key="3">
    <citation type="journal article" date="2006" name="Mol. Syst. Biol.">
        <title>Highly accurate genome sequences of Escherichia coli K-12 strains MG1655 and W3110.</title>
        <authorList>
            <person name="Hayashi K."/>
            <person name="Morooka N."/>
            <person name="Yamamoto Y."/>
            <person name="Fujita K."/>
            <person name="Isono K."/>
            <person name="Choi S."/>
            <person name="Ohtsubo E."/>
            <person name="Baba T."/>
            <person name="Wanner B.L."/>
            <person name="Mori H."/>
            <person name="Horiuchi T."/>
        </authorList>
    </citation>
    <scope>NUCLEOTIDE SEQUENCE [LARGE SCALE GENOMIC DNA]</scope>
    <source>
        <strain>K12 / W3110 / ATCC 27325 / DSM 5911</strain>
    </source>
</reference>
<reference key="4">
    <citation type="journal article" date="2001" name="Biochem. J.">
        <title>The Escherichia coli CcmG protein fulfils a specific role in cytochrome c assembly.</title>
        <authorList>
            <person name="Reid E."/>
            <person name="Cole J."/>
            <person name="Eaves D.J."/>
        </authorList>
    </citation>
    <scope>PROTEIN SEQUENCE OF 1-6</scope>
    <scope>CHARACTERIZATION</scope>
    <source>
        <strain>K12</strain>
    </source>
</reference>
<reference key="5">
    <citation type="journal article" date="1995" name="J. Bacteriol.">
        <title>Escherichia coli genes required for cytochrome c maturation.</title>
        <authorList>
            <person name="Thoeny-Meyer L."/>
            <person name="Fischer F."/>
            <person name="Kunzler P."/>
            <person name="Ritz D."/>
            <person name="Hennecke H."/>
        </authorList>
    </citation>
    <scope>CHARACTERIZATION</scope>
</reference>
<reference key="6">
    <citation type="submission" date="1994-11" db="UniProtKB">
        <authorList>
            <person name="Missiakas D."/>
            <person name="Georgopoulos C."/>
            <person name="Raina S."/>
        </authorList>
    </citation>
    <scope>CHARACTERIZATION</scope>
</reference>
<reference key="7">
    <citation type="journal article" date="1998" name="J. Bacteriol.">
        <title>The active-site cysteines of the periplasmic thioredoxin-like protein CcmG of Escherichia coli are important but not essential for cytochrome c maturation in vivo.</title>
        <authorList>
            <person name="Fabianek R.A."/>
            <person name="Hennecke H."/>
            <person name="Thoeny-Meyer L."/>
        </authorList>
    </citation>
    <scope>MUTAGENESIS OF CYS-80 AND CYS-83</scope>
</reference>
<reference key="8">
    <citation type="journal article" date="2001" name="Biochem. Biophys. Res. Commun.">
        <title>Biochemical characterization of the thioredoxin domain of Escherichia coli DsbE protein reveals a weak reductant.</title>
        <authorList>
            <person name="Li Q."/>
            <person name="Hu H.-Y."/>
            <person name="Xu G.-J."/>
        </authorList>
    </citation>
    <scope>CHARACTERIZATION</scope>
</reference>
<reference key="9">
    <citation type="journal article" date="2001" name="Biol. Chem.">
        <title>Structural and redox properties of the leaderless DsbE (CcmG) protein: both active-site cysteines of the reduced form are involved in its function in the Escherichia coli periplasm.</title>
        <authorList>
            <person name="Li Q."/>
            <person name="Hu H.-Y."/>
            <person name="Wang W.-Q."/>
            <person name="Xu G.-J."/>
        </authorList>
    </citation>
    <scope>CHARACTERIZATION</scope>
    <source>
        <strain>BL21-DE3</strain>
    </source>
</reference>